<accession>P53293</accession>
<accession>D6VUV1</accession>
<dbReference type="EMBL" id="Z72953">
    <property type="protein sequence ID" value="CAA97194.1"/>
    <property type="molecule type" value="Genomic_DNA"/>
</dbReference>
<dbReference type="EMBL" id="BK006941">
    <property type="protein sequence ID" value="DAA08262.1"/>
    <property type="molecule type" value="Genomic_DNA"/>
</dbReference>
<dbReference type="PIR" id="S64479">
    <property type="entry name" value="S64479"/>
</dbReference>
<dbReference type="BioGRID" id="33420">
    <property type="interactions" value="81"/>
</dbReference>
<dbReference type="DIP" id="DIP-5541N"/>
<dbReference type="FunCoup" id="P53293">
    <property type="interactions" value="15"/>
</dbReference>
<dbReference type="IntAct" id="P53293">
    <property type="interactions" value="1"/>
</dbReference>
<dbReference type="STRING" id="4932.YGR168C"/>
<dbReference type="PaxDb" id="4932-YGR168C"/>
<dbReference type="PeptideAtlas" id="P53293"/>
<dbReference type="EnsemblFungi" id="YGR168C_mRNA">
    <property type="protein sequence ID" value="YGR168C"/>
    <property type="gene ID" value="YGR168C"/>
</dbReference>
<dbReference type="KEGG" id="sce:YGR168C"/>
<dbReference type="AGR" id="SGD:S000003400"/>
<dbReference type="SGD" id="S000003400">
    <property type="gene designation" value="YGR168C"/>
</dbReference>
<dbReference type="VEuPathDB" id="FungiDB:YGR168C"/>
<dbReference type="eggNOG" id="ENOG502S3DC">
    <property type="taxonomic scope" value="Eukaryota"/>
</dbReference>
<dbReference type="HOGENOM" id="CLU_062488_1_0_1"/>
<dbReference type="InParanoid" id="P53293"/>
<dbReference type="OMA" id="KWAVWRQ"/>
<dbReference type="OrthoDB" id="4063341at2759"/>
<dbReference type="BioCyc" id="YEAST:G3O-30866-MONOMER"/>
<dbReference type="BioGRID-ORCS" id="853078">
    <property type="hits" value="1 hit in 10 CRISPR screens"/>
</dbReference>
<dbReference type="PRO" id="PR:P53293"/>
<dbReference type="Proteomes" id="UP000002311">
    <property type="component" value="Chromosome VII"/>
</dbReference>
<dbReference type="RNAct" id="P53293">
    <property type="molecule type" value="protein"/>
</dbReference>
<dbReference type="GO" id="GO:0005778">
    <property type="term" value="C:peroxisomal membrane"/>
    <property type="evidence" value="ECO:0000314"/>
    <property type="project" value="SGD"/>
</dbReference>
<dbReference type="GO" id="GO:0005777">
    <property type="term" value="C:peroxisome"/>
    <property type="evidence" value="ECO:0007005"/>
    <property type="project" value="SGD"/>
</dbReference>
<dbReference type="GO" id="GO:1900063">
    <property type="term" value="P:regulation of peroxisome organization"/>
    <property type="evidence" value="ECO:0000315"/>
    <property type="project" value="SGD"/>
</dbReference>
<keyword id="KW-0472">Membrane</keyword>
<keyword id="KW-1185">Reference proteome</keyword>
<keyword id="KW-0812">Transmembrane</keyword>
<keyword id="KW-1133">Transmembrane helix</keyword>
<evidence type="ECO:0000255" key="1"/>
<evidence type="ECO:0000305" key="2"/>
<feature type="chain" id="PRO_0000202838" description="Uncharacterized protein YGR168C">
    <location>
        <begin position="1"/>
        <end position="376"/>
    </location>
</feature>
<feature type="transmembrane region" description="Helical" evidence="1">
    <location>
        <begin position="153"/>
        <end position="173"/>
    </location>
</feature>
<feature type="transmembrane region" description="Helical" evidence="1">
    <location>
        <begin position="188"/>
        <end position="208"/>
    </location>
</feature>
<gene>
    <name type="ordered locus">YGR168C</name>
</gene>
<protein>
    <recommendedName>
        <fullName>Uncharacterized protein YGR168C</fullName>
    </recommendedName>
</protein>
<sequence>MKHNRPNGTGKAVSGFKQIIRRLLLLLNKKRRKQLVIILKRITQVYGINLVFYVKKWKLKKLQGENIQINDIMPWLRESTILVLLNILYPTLMKFPFLKNHYIHWSSIVGISLMLTKGEVPSWIIAHFLVEAIASKLKIAKLTQWLKKKNFSQGTLIKFQQILVCLAIIVLFAKLDRSSLPFRVLFDHRPFLIDFFTINAIFTVLAVYHRTLKFFFTSGTKSNKNVGGHEVRNFSQYLGVKNHNDWPISSSNLKHVMDRLNEIHEVTIDDNYANINEKIINSYFTKGFFPSLKWTILRQCIEYLFVTKRRRLMGNKLRCIVMLLTFTFVDPTSKMKISPFFAKFFAKSLVNVYLKKYWHCNFGKYILFFLFQLSIM</sequence>
<organism>
    <name type="scientific">Saccharomyces cerevisiae (strain ATCC 204508 / S288c)</name>
    <name type="common">Baker's yeast</name>
    <dbReference type="NCBI Taxonomy" id="559292"/>
    <lineage>
        <taxon>Eukaryota</taxon>
        <taxon>Fungi</taxon>
        <taxon>Dikarya</taxon>
        <taxon>Ascomycota</taxon>
        <taxon>Saccharomycotina</taxon>
        <taxon>Saccharomycetes</taxon>
        <taxon>Saccharomycetales</taxon>
        <taxon>Saccharomycetaceae</taxon>
        <taxon>Saccharomyces</taxon>
    </lineage>
</organism>
<reference key="1">
    <citation type="journal article" date="1997" name="Yeast">
        <title>Sequence analysis of 203 kilobases from Saccharomyces cerevisiae chromosome VII.</title>
        <authorList>
            <person name="Rieger M."/>
            <person name="Brueckner M."/>
            <person name="Schaefer M."/>
            <person name="Mueller-Auer S."/>
        </authorList>
    </citation>
    <scope>NUCLEOTIDE SEQUENCE [GENOMIC DNA]</scope>
    <source>
        <strain>ATCC 204508 / S288c</strain>
    </source>
</reference>
<reference key="2">
    <citation type="journal article" date="1997" name="Nature">
        <title>The nucleotide sequence of Saccharomyces cerevisiae chromosome VII.</title>
        <authorList>
            <person name="Tettelin H."/>
            <person name="Agostoni-Carbone M.L."/>
            <person name="Albermann K."/>
            <person name="Albers M."/>
            <person name="Arroyo J."/>
            <person name="Backes U."/>
            <person name="Barreiros T."/>
            <person name="Bertani I."/>
            <person name="Bjourson A.J."/>
            <person name="Brueckner M."/>
            <person name="Bruschi C.V."/>
            <person name="Carignani G."/>
            <person name="Castagnoli L."/>
            <person name="Cerdan E."/>
            <person name="Clemente M.L."/>
            <person name="Coblenz A."/>
            <person name="Coglievina M."/>
            <person name="Coissac E."/>
            <person name="Defoor E."/>
            <person name="Del Bino S."/>
            <person name="Delius H."/>
            <person name="Delneri D."/>
            <person name="de Wergifosse P."/>
            <person name="Dujon B."/>
            <person name="Durand P."/>
            <person name="Entian K.-D."/>
            <person name="Eraso P."/>
            <person name="Escribano V."/>
            <person name="Fabiani L."/>
            <person name="Fartmann B."/>
            <person name="Feroli F."/>
            <person name="Feuermann M."/>
            <person name="Frontali L."/>
            <person name="Garcia-Gonzalez M."/>
            <person name="Garcia-Saez M.I."/>
            <person name="Goffeau A."/>
            <person name="Guerreiro P."/>
            <person name="Hani J."/>
            <person name="Hansen M."/>
            <person name="Hebling U."/>
            <person name="Hernandez K."/>
            <person name="Heumann K."/>
            <person name="Hilger F."/>
            <person name="Hofmann B."/>
            <person name="Indge K.J."/>
            <person name="James C.M."/>
            <person name="Klima R."/>
            <person name="Koetter P."/>
            <person name="Kramer B."/>
            <person name="Kramer W."/>
            <person name="Lauquin G."/>
            <person name="Leuther H."/>
            <person name="Louis E.J."/>
            <person name="Maillier E."/>
            <person name="Marconi A."/>
            <person name="Martegani E."/>
            <person name="Mazon M.J."/>
            <person name="Mazzoni C."/>
            <person name="McReynolds A.D.K."/>
            <person name="Melchioretto P."/>
            <person name="Mewes H.-W."/>
            <person name="Minenkova O."/>
            <person name="Mueller-Auer S."/>
            <person name="Nawrocki A."/>
            <person name="Netter P."/>
            <person name="Neu R."/>
            <person name="Nombela C."/>
            <person name="Oliver S.G."/>
            <person name="Panzeri L."/>
            <person name="Paoluzi S."/>
            <person name="Plevani P."/>
            <person name="Portetelle D."/>
            <person name="Portillo F."/>
            <person name="Potier S."/>
            <person name="Purnelle B."/>
            <person name="Rieger M."/>
            <person name="Riles L."/>
            <person name="Rinaldi T."/>
            <person name="Robben J."/>
            <person name="Rodrigues-Pousada C."/>
            <person name="Rodriguez-Belmonte E."/>
            <person name="Rodriguez-Torres A.M."/>
            <person name="Rose M."/>
            <person name="Ruzzi M."/>
            <person name="Saliola M."/>
            <person name="Sanchez-Perez M."/>
            <person name="Schaefer B."/>
            <person name="Schaefer M."/>
            <person name="Scharfe M."/>
            <person name="Schmidheini T."/>
            <person name="Schreer A."/>
            <person name="Skala J."/>
            <person name="Souciet J.-L."/>
            <person name="Steensma H.Y."/>
            <person name="Talla E."/>
            <person name="Thierry A."/>
            <person name="Vandenbol M."/>
            <person name="van der Aart Q.J.M."/>
            <person name="Van Dyck L."/>
            <person name="Vanoni M."/>
            <person name="Verhasselt P."/>
            <person name="Voet M."/>
            <person name="Volckaert G."/>
            <person name="Wambutt R."/>
            <person name="Watson M.D."/>
            <person name="Weber N."/>
            <person name="Wedler E."/>
            <person name="Wedler H."/>
            <person name="Wipfli P."/>
            <person name="Wolf K."/>
            <person name="Wright L.F."/>
            <person name="Zaccaria P."/>
            <person name="Zimmermann M."/>
            <person name="Zollner A."/>
            <person name="Kleine K."/>
        </authorList>
    </citation>
    <scope>NUCLEOTIDE SEQUENCE [LARGE SCALE GENOMIC DNA]</scope>
    <source>
        <strain>ATCC 204508 / S288c</strain>
    </source>
</reference>
<reference key="3">
    <citation type="journal article" date="2014" name="G3 (Bethesda)">
        <title>The reference genome sequence of Saccharomyces cerevisiae: Then and now.</title>
        <authorList>
            <person name="Engel S.R."/>
            <person name="Dietrich F.S."/>
            <person name="Fisk D.G."/>
            <person name="Binkley G."/>
            <person name="Balakrishnan R."/>
            <person name="Costanzo M.C."/>
            <person name="Dwight S.S."/>
            <person name="Hitz B.C."/>
            <person name="Karra K."/>
            <person name="Nash R.S."/>
            <person name="Weng S."/>
            <person name="Wong E.D."/>
            <person name="Lloyd P."/>
            <person name="Skrzypek M.S."/>
            <person name="Miyasato S.R."/>
            <person name="Simison M."/>
            <person name="Cherry J.M."/>
        </authorList>
    </citation>
    <scope>GENOME REANNOTATION</scope>
    <source>
        <strain>ATCC 204508 / S288c</strain>
    </source>
</reference>
<proteinExistence type="predicted"/>
<comment type="subcellular location">
    <subcellularLocation>
        <location evidence="2">Membrane</location>
        <topology evidence="2">Multi-pass membrane protein</topology>
    </subcellularLocation>
</comment>
<name>YG3W_YEAST</name>